<comment type="similarity">
    <text evidence="1">Belongs to the UPF0502 family.</text>
</comment>
<sequence>MSLAPSPLVGETPLHAVEVRILGCLIEKQLTTPETYPLTLNAVQLACNQKTSREPLMQLETGEVGRYLRSLEGRKLVHLVMGSRADRWEQRCDKQLELVKPQTVLLGLLMLRGPQTLNELLTRSNRMHDFDDVDEVQHQLERLIARGLAVLLPRQSGQREDRYMHLLGEPADLESLLLSRPASRGDASAPSEDRLVELEARIAALEERLARLEGAQ</sequence>
<dbReference type="EMBL" id="CP000680">
    <property type="protein sequence ID" value="ABP85383.1"/>
    <property type="molecule type" value="Genomic_DNA"/>
</dbReference>
<dbReference type="SMR" id="A4XVL7"/>
<dbReference type="STRING" id="399739.Pmen_2627"/>
<dbReference type="KEGG" id="pmy:Pmen_2627"/>
<dbReference type="PATRIC" id="fig|399739.8.peg.2655"/>
<dbReference type="eggNOG" id="COG3132">
    <property type="taxonomic scope" value="Bacteria"/>
</dbReference>
<dbReference type="HOGENOM" id="CLU_057831_2_0_6"/>
<dbReference type="OrthoDB" id="9784785at2"/>
<dbReference type="Gene3D" id="1.10.10.10">
    <property type="entry name" value="Winged helix-like DNA-binding domain superfamily/Winged helix DNA-binding domain"/>
    <property type="match status" value="2"/>
</dbReference>
<dbReference type="HAMAP" id="MF_01584">
    <property type="entry name" value="UPF0502"/>
    <property type="match status" value="1"/>
</dbReference>
<dbReference type="InterPro" id="IPR007432">
    <property type="entry name" value="DUF480"/>
</dbReference>
<dbReference type="InterPro" id="IPR036388">
    <property type="entry name" value="WH-like_DNA-bd_sf"/>
</dbReference>
<dbReference type="InterPro" id="IPR036390">
    <property type="entry name" value="WH_DNA-bd_sf"/>
</dbReference>
<dbReference type="PANTHER" id="PTHR38768">
    <property type="entry name" value="UPF0502 PROTEIN YCEH"/>
    <property type="match status" value="1"/>
</dbReference>
<dbReference type="PANTHER" id="PTHR38768:SF1">
    <property type="entry name" value="UPF0502 PROTEIN YCEH"/>
    <property type="match status" value="1"/>
</dbReference>
<dbReference type="Pfam" id="PF04337">
    <property type="entry name" value="DUF480"/>
    <property type="match status" value="1"/>
</dbReference>
<dbReference type="SUPFAM" id="SSF46785">
    <property type="entry name" value="Winged helix' DNA-binding domain"/>
    <property type="match status" value="2"/>
</dbReference>
<feature type="chain" id="PRO_1000069300" description="UPF0502 protein Pmen_2627">
    <location>
        <begin position="1"/>
        <end position="216"/>
    </location>
</feature>
<evidence type="ECO:0000255" key="1">
    <source>
        <dbReference type="HAMAP-Rule" id="MF_01584"/>
    </source>
</evidence>
<protein>
    <recommendedName>
        <fullName evidence="1">UPF0502 protein Pmen_2627</fullName>
    </recommendedName>
</protein>
<gene>
    <name type="ordered locus">Pmen_2627</name>
</gene>
<reference key="1">
    <citation type="submission" date="2007-04" db="EMBL/GenBank/DDBJ databases">
        <title>Complete sequence of Pseudomonas mendocina ymp.</title>
        <authorList>
            <consortium name="US DOE Joint Genome Institute"/>
            <person name="Copeland A."/>
            <person name="Lucas S."/>
            <person name="Lapidus A."/>
            <person name="Barry K."/>
            <person name="Glavina del Rio T."/>
            <person name="Dalin E."/>
            <person name="Tice H."/>
            <person name="Pitluck S."/>
            <person name="Kiss H."/>
            <person name="Brettin T."/>
            <person name="Detter J.C."/>
            <person name="Bruce D."/>
            <person name="Han C."/>
            <person name="Schmutz J."/>
            <person name="Larimer F."/>
            <person name="Land M."/>
            <person name="Hauser L."/>
            <person name="Kyrpides N."/>
            <person name="Mikhailova N."/>
            <person name="Hersman L."/>
            <person name="Dubois J."/>
            <person name="Maurice P."/>
            <person name="Richardson P."/>
        </authorList>
    </citation>
    <scope>NUCLEOTIDE SEQUENCE [LARGE SCALE GENOMIC DNA]</scope>
    <source>
        <strain>ymp</strain>
    </source>
</reference>
<organism>
    <name type="scientific">Ectopseudomonas mendocina (strain ymp)</name>
    <name type="common">Pseudomonas mendocina</name>
    <dbReference type="NCBI Taxonomy" id="399739"/>
    <lineage>
        <taxon>Bacteria</taxon>
        <taxon>Pseudomonadati</taxon>
        <taxon>Pseudomonadota</taxon>
        <taxon>Gammaproteobacteria</taxon>
        <taxon>Pseudomonadales</taxon>
        <taxon>Pseudomonadaceae</taxon>
        <taxon>Ectopseudomonas</taxon>
    </lineage>
</organism>
<accession>A4XVL7</accession>
<proteinExistence type="inferred from homology"/>
<name>Y2627_ECTM1</name>